<evidence type="ECO:0000255" key="1">
    <source>
        <dbReference type="HAMAP-Rule" id="MF_00076"/>
    </source>
</evidence>
<gene>
    <name evidence="1" type="primary">hisB</name>
    <name type="ordered locus">Cpar_0701</name>
</gene>
<keyword id="KW-0028">Amino-acid biosynthesis</keyword>
<keyword id="KW-0963">Cytoplasm</keyword>
<keyword id="KW-0368">Histidine biosynthesis</keyword>
<keyword id="KW-0456">Lyase</keyword>
<comment type="catalytic activity">
    <reaction evidence="1">
        <text>D-erythro-1-(imidazol-4-yl)glycerol 3-phosphate = 3-(imidazol-4-yl)-2-oxopropyl phosphate + H2O</text>
        <dbReference type="Rhea" id="RHEA:11040"/>
        <dbReference type="ChEBI" id="CHEBI:15377"/>
        <dbReference type="ChEBI" id="CHEBI:57766"/>
        <dbReference type="ChEBI" id="CHEBI:58278"/>
        <dbReference type="EC" id="4.2.1.19"/>
    </reaction>
</comment>
<comment type="pathway">
    <text evidence="1">Amino-acid biosynthesis; L-histidine biosynthesis; L-histidine from 5-phospho-alpha-D-ribose 1-diphosphate: step 6/9.</text>
</comment>
<comment type="subcellular location">
    <subcellularLocation>
        <location evidence="1">Cytoplasm</location>
    </subcellularLocation>
</comment>
<comment type="similarity">
    <text evidence="1">Belongs to the imidazoleglycerol-phosphate dehydratase family.</text>
</comment>
<proteinExistence type="inferred from homology"/>
<accession>B3QMG8</accession>
<dbReference type="EC" id="4.2.1.19" evidence="1"/>
<dbReference type="EMBL" id="CP001099">
    <property type="protein sequence ID" value="ACF11121.1"/>
    <property type="molecule type" value="Genomic_DNA"/>
</dbReference>
<dbReference type="RefSeq" id="WP_012501954.1">
    <property type="nucleotide sequence ID" value="NC_011027.1"/>
</dbReference>
<dbReference type="SMR" id="B3QMG8"/>
<dbReference type="STRING" id="517417.Cpar_0701"/>
<dbReference type="KEGG" id="cpc:Cpar_0701"/>
<dbReference type="eggNOG" id="COG0131">
    <property type="taxonomic scope" value="Bacteria"/>
</dbReference>
<dbReference type="HOGENOM" id="CLU_044308_3_0_10"/>
<dbReference type="OrthoDB" id="9790411at2"/>
<dbReference type="UniPathway" id="UPA00031">
    <property type="reaction ID" value="UER00011"/>
</dbReference>
<dbReference type="Proteomes" id="UP000008811">
    <property type="component" value="Chromosome"/>
</dbReference>
<dbReference type="GO" id="GO:0005737">
    <property type="term" value="C:cytoplasm"/>
    <property type="evidence" value="ECO:0007669"/>
    <property type="project" value="UniProtKB-SubCell"/>
</dbReference>
<dbReference type="GO" id="GO:0004424">
    <property type="term" value="F:imidazoleglycerol-phosphate dehydratase activity"/>
    <property type="evidence" value="ECO:0007669"/>
    <property type="project" value="UniProtKB-UniRule"/>
</dbReference>
<dbReference type="GO" id="GO:0000105">
    <property type="term" value="P:L-histidine biosynthetic process"/>
    <property type="evidence" value="ECO:0007669"/>
    <property type="project" value="UniProtKB-UniRule"/>
</dbReference>
<dbReference type="CDD" id="cd07914">
    <property type="entry name" value="IGPD"/>
    <property type="match status" value="1"/>
</dbReference>
<dbReference type="FunFam" id="3.30.230.40:FF:000001">
    <property type="entry name" value="Imidazoleglycerol-phosphate dehydratase HisB"/>
    <property type="match status" value="1"/>
</dbReference>
<dbReference type="FunFam" id="3.30.230.40:FF:000003">
    <property type="entry name" value="Imidazoleglycerol-phosphate dehydratase HisB"/>
    <property type="match status" value="1"/>
</dbReference>
<dbReference type="Gene3D" id="3.30.230.40">
    <property type="entry name" value="Imidazole glycerol phosphate dehydratase, domain 1"/>
    <property type="match status" value="2"/>
</dbReference>
<dbReference type="HAMAP" id="MF_00076">
    <property type="entry name" value="HisB"/>
    <property type="match status" value="1"/>
</dbReference>
<dbReference type="InterPro" id="IPR038494">
    <property type="entry name" value="IGPD_sf"/>
</dbReference>
<dbReference type="InterPro" id="IPR000807">
    <property type="entry name" value="ImidazoleglycerolP_deHydtase"/>
</dbReference>
<dbReference type="InterPro" id="IPR020565">
    <property type="entry name" value="ImidazoleglycerP_deHydtase_CS"/>
</dbReference>
<dbReference type="InterPro" id="IPR020568">
    <property type="entry name" value="Ribosomal_Su5_D2-typ_SF"/>
</dbReference>
<dbReference type="NCBIfam" id="NF002111">
    <property type="entry name" value="PRK00951.2-1"/>
    <property type="match status" value="1"/>
</dbReference>
<dbReference type="NCBIfam" id="NF002114">
    <property type="entry name" value="PRK00951.2-4"/>
    <property type="match status" value="1"/>
</dbReference>
<dbReference type="PANTHER" id="PTHR23133:SF2">
    <property type="entry name" value="IMIDAZOLEGLYCEROL-PHOSPHATE DEHYDRATASE"/>
    <property type="match status" value="1"/>
</dbReference>
<dbReference type="PANTHER" id="PTHR23133">
    <property type="entry name" value="IMIDAZOLEGLYCEROL-PHOSPHATE DEHYDRATASE HIS7"/>
    <property type="match status" value="1"/>
</dbReference>
<dbReference type="Pfam" id="PF00475">
    <property type="entry name" value="IGPD"/>
    <property type="match status" value="1"/>
</dbReference>
<dbReference type="SUPFAM" id="SSF54211">
    <property type="entry name" value="Ribosomal protein S5 domain 2-like"/>
    <property type="match status" value="2"/>
</dbReference>
<dbReference type="PROSITE" id="PS00954">
    <property type="entry name" value="IGP_DEHYDRATASE_1"/>
    <property type="match status" value="1"/>
</dbReference>
<dbReference type="PROSITE" id="PS00955">
    <property type="entry name" value="IGP_DEHYDRATASE_2"/>
    <property type="match status" value="1"/>
</dbReference>
<name>HIS7_CHLP8</name>
<reference key="1">
    <citation type="submission" date="2008-06" db="EMBL/GenBank/DDBJ databases">
        <title>Complete sequence of Chlorobaculum parvum NCIB 8327.</title>
        <authorList>
            <consortium name="US DOE Joint Genome Institute"/>
            <person name="Lucas S."/>
            <person name="Copeland A."/>
            <person name="Lapidus A."/>
            <person name="Glavina del Rio T."/>
            <person name="Dalin E."/>
            <person name="Tice H."/>
            <person name="Bruce D."/>
            <person name="Goodwin L."/>
            <person name="Pitluck S."/>
            <person name="Schmutz J."/>
            <person name="Larimer F."/>
            <person name="Land M."/>
            <person name="Hauser L."/>
            <person name="Kyrpides N."/>
            <person name="Mikhailova N."/>
            <person name="Zhao F."/>
            <person name="Li T."/>
            <person name="Liu Z."/>
            <person name="Overmann J."/>
            <person name="Bryant D.A."/>
            <person name="Richardson P."/>
        </authorList>
    </citation>
    <scope>NUCLEOTIDE SEQUENCE [LARGE SCALE GENOMIC DNA]</scope>
    <source>
        <strain>DSM 263 / NCIMB 8327</strain>
    </source>
</reference>
<sequence>MTQRIASHSRKTAETDITATVNLDGTGTSAIETGVVFLDHMLTSFSRHSGIDVQLRCSGDLDVDDHHTVEDVALVLGKAIEEALGDKKGIERYGWAIIPMDEALARCSIDLGGRSYCVFKAEFRRPVIQGLSTEMVEHFFISLSRTMNANLHLAILEGQNTHHLIEALFKSLAYAMKQAVRVSGTRIPSTKESL</sequence>
<protein>
    <recommendedName>
        <fullName evidence="1">Imidazoleglycerol-phosphate dehydratase</fullName>
        <shortName evidence="1">IGPD</shortName>
        <ecNumber evidence="1">4.2.1.19</ecNumber>
    </recommendedName>
</protein>
<organism>
    <name type="scientific">Chlorobaculum parvum (strain DSM 263 / NCIMB 8327)</name>
    <name type="common">Chlorobium vibrioforme subsp. thiosulfatophilum</name>
    <dbReference type="NCBI Taxonomy" id="517417"/>
    <lineage>
        <taxon>Bacteria</taxon>
        <taxon>Pseudomonadati</taxon>
        <taxon>Chlorobiota</taxon>
        <taxon>Chlorobiia</taxon>
        <taxon>Chlorobiales</taxon>
        <taxon>Chlorobiaceae</taxon>
        <taxon>Chlorobaculum</taxon>
    </lineage>
</organism>
<feature type="chain" id="PRO_1000092682" description="Imidazoleglycerol-phosphate dehydratase">
    <location>
        <begin position="1"/>
        <end position="194"/>
    </location>
</feature>